<name>LUTB_EXISA</name>
<proteinExistence type="inferred from homology"/>
<feature type="chain" id="PRO_0000383980" description="Lactate utilization protein B">
    <location>
        <begin position="1"/>
        <end position="468"/>
    </location>
</feature>
<feature type="domain" description="4Fe-4S ferredoxin-type 1" evidence="1">
    <location>
        <begin position="303"/>
        <end position="333"/>
    </location>
</feature>
<feature type="domain" description="4Fe-4S ferredoxin-type 2" evidence="1">
    <location>
        <begin position="352"/>
        <end position="381"/>
    </location>
</feature>
<feature type="region of interest" description="Disordered" evidence="2">
    <location>
        <begin position="442"/>
        <end position="468"/>
    </location>
</feature>
<feature type="compositionally biased region" description="Basic and acidic residues" evidence="2">
    <location>
        <begin position="457"/>
        <end position="468"/>
    </location>
</feature>
<feature type="binding site" evidence="1">
    <location>
        <position position="312"/>
    </location>
    <ligand>
        <name>[4Fe-4S] cluster</name>
        <dbReference type="ChEBI" id="CHEBI:49883"/>
        <label>1</label>
    </ligand>
</feature>
<feature type="binding site" evidence="1">
    <location>
        <position position="315"/>
    </location>
    <ligand>
        <name>[4Fe-4S] cluster</name>
        <dbReference type="ChEBI" id="CHEBI:49883"/>
        <label>1</label>
    </ligand>
</feature>
<feature type="binding site" evidence="1">
    <location>
        <position position="318"/>
    </location>
    <ligand>
        <name>[4Fe-4S] cluster</name>
        <dbReference type="ChEBI" id="CHEBI:49883"/>
        <label>1</label>
    </ligand>
</feature>
<feature type="binding site" evidence="1">
    <location>
        <position position="322"/>
    </location>
    <ligand>
        <name>[4Fe-4S] cluster</name>
        <dbReference type="ChEBI" id="CHEBI:49883"/>
        <label>2</label>
    </ligand>
</feature>
<feature type="binding site" evidence="1">
    <location>
        <position position="365"/>
    </location>
    <ligand>
        <name>[4Fe-4S] cluster</name>
        <dbReference type="ChEBI" id="CHEBI:49883"/>
        <label>2</label>
    </ligand>
</feature>
<feature type="binding site" evidence="1">
    <location>
        <position position="368"/>
    </location>
    <ligand>
        <name>[4Fe-4S] cluster</name>
        <dbReference type="ChEBI" id="CHEBI:49883"/>
        <label>2</label>
    </ligand>
</feature>
<feature type="binding site" evidence="1">
    <location>
        <position position="372"/>
    </location>
    <ligand>
        <name>[4Fe-4S] cluster</name>
        <dbReference type="ChEBI" id="CHEBI:49883"/>
        <label>1</label>
    </ligand>
</feature>
<comment type="function">
    <text evidence="1">Is involved in L-lactate degradation and allows cells to grow with lactate as the sole carbon source. Has probably a role as an electron transporter during oxidation of L-lactate.</text>
</comment>
<comment type="similarity">
    <text evidence="1">Belongs to the LutB/YkgF family.</text>
</comment>
<gene>
    <name evidence="1" type="primary">lutB</name>
    <name type="ordered locus">EAT1b_1960</name>
</gene>
<evidence type="ECO:0000255" key="1">
    <source>
        <dbReference type="HAMAP-Rule" id="MF_02103"/>
    </source>
</evidence>
<evidence type="ECO:0000256" key="2">
    <source>
        <dbReference type="SAM" id="MobiDB-lite"/>
    </source>
</evidence>
<dbReference type="EMBL" id="CP001615">
    <property type="protein sequence ID" value="ACQ70884.1"/>
    <property type="molecule type" value="Genomic_DNA"/>
</dbReference>
<dbReference type="STRING" id="360911.EAT1b_1960"/>
<dbReference type="KEGG" id="eat:EAT1b_1960"/>
<dbReference type="eggNOG" id="COG1139">
    <property type="taxonomic scope" value="Bacteria"/>
</dbReference>
<dbReference type="HOGENOM" id="CLU_027059_2_0_9"/>
<dbReference type="OrthoDB" id="9782337at2"/>
<dbReference type="Proteomes" id="UP000000716">
    <property type="component" value="Chromosome"/>
</dbReference>
<dbReference type="GO" id="GO:0051539">
    <property type="term" value="F:4 iron, 4 sulfur cluster binding"/>
    <property type="evidence" value="ECO:0007669"/>
    <property type="project" value="UniProtKB-KW"/>
</dbReference>
<dbReference type="GO" id="GO:0046872">
    <property type="term" value="F:metal ion binding"/>
    <property type="evidence" value="ECO:0007669"/>
    <property type="project" value="UniProtKB-KW"/>
</dbReference>
<dbReference type="GO" id="GO:0006089">
    <property type="term" value="P:lactate metabolic process"/>
    <property type="evidence" value="ECO:0007669"/>
    <property type="project" value="UniProtKB-UniRule"/>
</dbReference>
<dbReference type="Gene3D" id="1.10.1060.10">
    <property type="entry name" value="Alpha-helical ferredoxin"/>
    <property type="match status" value="1"/>
</dbReference>
<dbReference type="Gene3D" id="3.40.50.10420">
    <property type="entry name" value="NagB/RpiA/CoA transferase-like"/>
    <property type="match status" value="1"/>
</dbReference>
<dbReference type="HAMAP" id="MF_02103">
    <property type="entry name" value="LutB"/>
    <property type="match status" value="1"/>
</dbReference>
<dbReference type="InterPro" id="IPR017896">
    <property type="entry name" value="4Fe4S_Fe-S-bd"/>
</dbReference>
<dbReference type="InterPro" id="IPR017900">
    <property type="entry name" value="4Fe4S_Fe_S_CS"/>
</dbReference>
<dbReference type="InterPro" id="IPR024185">
    <property type="entry name" value="FTHF_cligase-like_sf"/>
</dbReference>
<dbReference type="InterPro" id="IPR009051">
    <property type="entry name" value="Helical_ferredxn"/>
</dbReference>
<dbReference type="InterPro" id="IPR003741">
    <property type="entry name" value="LUD_dom"/>
</dbReference>
<dbReference type="InterPro" id="IPR022825">
    <property type="entry name" value="LutB"/>
</dbReference>
<dbReference type="InterPro" id="IPR004452">
    <property type="entry name" value="LutB/LldF"/>
</dbReference>
<dbReference type="InterPro" id="IPR024569">
    <property type="entry name" value="LutB_C"/>
</dbReference>
<dbReference type="InterPro" id="IPR037171">
    <property type="entry name" value="NagB/RpiA_transferase-like"/>
</dbReference>
<dbReference type="NCBIfam" id="TIGR00273">
    <property type="entry name" value="LutB/LldF family L-lactate oxidation iron-sulfur protein"/>
    <property type="match status" value="1"/>
</dbReference>
<dbReference type="PANTHER" id="PTHR47153">
    <property type="entry name" value="LACTATE UTILIZATION PROTEIN B"/>
    <property type="match status" value="1"/>
</dbReference>
<dbReference type="PANTHER" id="PTHR47153:SF2">
    <property type="entry name" value="LACTATE UTILIZATION PROTEIN B"/>
    <property type="match status" value="1"/>
</dbReference>
<dbReference type="Pfam" id="PF13183">
    <property type="entry name" value="Fer4_8"/>
    <property type="match status" value="1"/>
</dbReference>
<dbReference type="Pfam" id="PF02589">
    <property type="entry name" value="LUD_dom"/>
    <property type="match status" value="1"/>
</dbReference>
<dbReference type="Pfam" id="PF11870">
    <property type="entry name" value="LutB_C"/>
    <property type="match status" value="1"/>
</dbReference>
<dbReference type="SUPFAM" id="SSF46548">
    <property type="entry name" value="alpha-helical ferredoxin"/>
    <property type="match status" value="1"/>
</dbReference>
<dbReference type="SUPFAM" id="SSF100950">
    <property type="entry name" value="NagB/RpiA/CoA transferase-like"/>
    <property type="match status" value="1"/>
</dbReference>
<dbReference type="PROSITE" id="PS00198">
    <property type="entry name" value="4FE4S_FER_1"/>
    <property type="match status" value="1"/>
</dbReference>
<sequence length="468" mass="51996">MSMGIRLDEKFQDRRKDGIEDAFMRQAVSSAQNRLRDGRLNAAGELGDWEAFRDHSEEIRQHVLEHLDYYLYQLSENVSKRGGSVFFAETPEEANRYIREVIRSKQAKHVVKSKSMVTEEIGLNEALQEEGCTVVESDLGEWILQLDEDPPSHIVAPALHKDRNAVHETFTAHGYTGSNDPTELGRYARQELRKDFLKAEVGITGCNFAIAESGAVGLVTNEGNGRMVTSLPDTVISVMGMERVVPSYEEFEVLVNMLCRSAVGQRLTSYITTFAGTRAVGEVDGPEEFHLVIVDNKRSNILGTQFQSVLQCIRCAACINVCPVYRHIGGHAYGSIYPGPIGAVLAPLLDGYENYKELPYASSLCGACTEACPVKIPLHELLIEHRRVIVEEKKQSPFVERIAMKGFAVTASSPFLFEAAEHVAPFATSPFATSGQIEKGLPAWTDSKDLPQPNKQTVRDWFKKRGNA</sequence>
<organism>
    <name type="scientific">Exiguobacterium sp. (strain ATCC BAA-1283 / AT1b)</name>
    <dbReference type="NCBI Taxonomy" id="360911"/>
    <lineage>
        <taxon>Bacteria</taxon>
        <taxon>Bacillati</taxon>
        <taxon>Bacillota</taxon>
        <taxon>Bacilli</taxon>
        <taxon>Bacillales</taxon>
        <taxon>Bacillales Family XII. Incertae Sedis</taxon>
        <taxon>Exiguobacterium</taxon>
    </lineage>
</organism>
<reference key="1">
    <citation type="journal article" date="2011" name="J. Bacteriol.">
        <title>Complete genome sequence of the Thermophilic Bacterium Exiguobacterium sp. AT1b.</title>
        <authorList>
            <person name="Vishnivetskaya T.A."/>
            <person name="Lucas S."/>
            <person name="Copeland A."/>
            <person name="Lapidus A."/>
            <person name="Glavina del Rio T."/>
            <person name="Dalin E."/>
            <person name="Tice H."/>
            <person name="Bruce D.C."/>
            <person name="Goodwin L.A."/>
            <person name="Pitluck S."/>
            <person name="Saunders E."/>
            <person name="Brettin T."/>
            <person name="Detter C."/>
            <person name="Han C."/>
            <person name="Larimer F."/>
            <person name="Land M.L."/>
            <person name="Hauser L.J."/>
            <person name="Kyrpides N.C."/>
            <person name="Ovchinnikova G."/>
            <person name="Kathariou S."/>
            <person name="Ramaley R.F."/>
            <person name="Rodrigues D.F."/>
            <person name="Hendrix C."/>
            <person name="Richardson P."/>
            <person name="Tiedje J.M."/>
        </authorList>
    </citation>
    <scope>NUCLEOTIDE SEQUENCE [LARGE SCALE GENOMIC DNA]</scope>
    <source>
        <strain>ATCC BAA-1283 / AT1b</strain>
    </source>
</reference>
<keyword id="KW-0004">4Fe-4S</keyword>
<keyword id="KW-0249">Electron transport</keyword>
<keyword id="KW-0408">Iron</keyword>
<keyword id="KW-0411">Iron-sulfur</keyword>
<keyword id="KW-0479">Metal-binding</keyword>
<keyword id="KW-0677">Repeat</keyword>
<keyword id="KW-0813">Transport</keyword>
<protein>
    <recommendedName>
        <fullName evidence="1">Lactate utilization protein B</fullName>
    </recommendedName>
</protein>
<accession>C4L0S1</accession>